<accession>M9NDE3</accession>
<accession>Q9VQV1</accession>
<name>BARK_DROME</name>
<sequence length="3123" mass="350461">MKLQHHKTNRQRISKPHRDPKWASICLWLLVTLAFSTHLARSQESRQTEDSKEVELLQDNDIEFASLDGASQLLPATRHSGADVTVAPQGSTPSMTSSSSYTELQGGEILSDRILRRSESPYLARDDIEVLRGARLTIEPGVTIEFAPTKGLKINGVLQAVGTPTSRIVLKSQSNTANYKLELPDDQEKGIRLVDGPTPVEGRLQLFHKGAWRSVCSNSRNWTLADYGVACKQLGYRGGRFWNWVERTPGYYPRLLYEQPKCKGGEGSLQDCAWTSRQMGAGACDYHNDLGIQCLPVHSETLGHWRGIYFDNAPSTKALGRDNIVYAAQSESRLKYVDIIRAGSGAGFNAKSAVEVQGLPPQMEHVVISHSAYTGFNSTRPWAGFQLQNVTVRKCNGIGVFVNSSQGAVQLDGCSIVDNAGDGIKYVGHDLRGTERKDRASIYDFCTLPTTSGQTYPISLSFTQKYYAGSGKECGKYFFTRPGYLLTLHFENFVLMQNETATVEIYDGASTNDRLLFEWKARNFTRPQSVTSTREKMFVRIRADARQELNGFFRMTSGDSVAYDLKVSQSTVEDNGGRGVAIDNIRSKLHVHSSSVSGNGHVAGVHVTSGAGDVNITSSNISFNNGAGVNITYYGGNRNISRSALTANKGYGVATWLNQTSDVNRMEYIPFNQTSVVEYSQIGGNLETGVFHGNFCRPIWVNITGNSFNGSQQNDIFIESCYQATANGRPNMQLQLGHNQFKYSQANSIYLSPALNLQGRIEYNMFRFGSYGCLFINNDYIYPEFNYFPVKLIIQSNYFMRNSGVHVVSLGLSPYSRAEVQYILFTRNFVRGNNITEAFGPLIAGSEGSDGAGRLNPRSRVAAPVVVGSSNVDIFRNILHNLDSMYEIGSQLTDQSKIINATCNWLGHTDENKIYARLFHRNDRYNLAKINYLPYLLHSSNPGSTAMITVSTVVPRFFHEGSDVIGGEVDGQDMVPAGTYTVTKDINIRPGGKLILQPGTTLKFEPSVGMMVAGKLEARGRRPDDILFTLKRETIMGESNDTETIDLDSETEAIDMETEVIPADGVPRVPVRLVGGAGANEGRLQVYLKGRWGTVCDYGWNVLNAALVCHQLGYSLNPQDWRLLRSQLPNAGTSEDILMANVRCTLQDRDVTKCRAEYEFENTCSHENDVGLRCYEGAWAGVRFSMLAERADLQYVTVEKAGLFDYTTNAFKPAVQMDHARHNLENVRIVNNLQDGLGIIYADIYAGKSVNNIKNSEFSGNKGSGISLKQLDFRVSGSIIKDNKGSGVSHDAVISALDQKEIGGWFNMATDFNSFDTDYDPYLLPREISNIDLGTFEHKYIRTEELLGQNINRKIVVQCPAGYVIGIQLLNPIHNLSTESINILNARTENIRSDLWQVKRDLNVFPVTSSSYGIIIYYESGLQALGGAVLMLSTVTAPVQNIRNRIVSGAVPTLTIRSTKIQKNLRGITGIYYNRYIGDNGEYYLRKANESIKLINSELSYNEREAILIRSPFWDVISSNLSEVTLHVNGSLITQNGLGIRQMSKDLRSSNNLFHYVIQDTTFEQNTHGGFQVSLPYVWQYNENFTHSIYFGNSTWQRNRDFRISVSGHYTVFNITSNVFRENNCPGALISLDGMEKRLRFDNNRFESNNAKFVLLFKADSLSEIIGQVPASIEFNSFKGNNIVTMTANYRNHYMKVARRIRKQHKIPTAVIRLDGVQNVRLYRNLIAENEMDYNLVAGVRSARLNNYFEARENWWGTKDTAFIEAKIFDFDNWNDHADVIYQPFLIEDSYDASVSVVVPFNQDQEIDLTNYKGGRVYKDLLLTKQSTPYYISSDITVMPGKTLTINHGVTMEFEPNVGILVLGTLVAIGYRESPIVMRPFRNATRESLIDVQPKKRALEDMSAPLTEFDSIRLCTSANNCTGDADGLFGLNEGFLEYFNHTTLQWVPICDSRFTERNAQVVCRELGYDPLNVYYGHDRRIEFHTNSLTRIWSWVQPLECRGDEERMEDCAERLNGQLYGHRHECRWDDVFVFVSCNGIADDEVYWGGIRFANSKFEEIQYEHRLHNTRSHARLPLRESQLEFVRIEQAGILHNHKAAAIQAIHKNPSITSVSIENSANHGINMIAPSGKLNLNHLNINNTLGTGISIVSLSGEGRDSDESSFTPLKKLDLPYKLFSLVDICDPQKVLTIEERMLIYYKYDNNPVNCVKIFTSAFRAKPIGFRLLQSNLFNHSKLYGRTDFIKLYDGDIYNVTATYLGKIESDTDNQRSFFKTKGPTMSLQLVASGAPETHGFIAEVVTVPISTLGQYRDALHNITDTHISGAIKGAVTYSSAGEVTPTLTLIGNRIEKNCRQLYGNFSTCTSALNLDVQNMNSLYFMNNLITENQGGLRIRADSRGSATSLRGFVHHNLFMRNRNRPALYVEGRQSSPYQEVELYRNYFAQNMAGYEDVIRLCQVVSNFSYNYVHSNVGGRIMEVSGFEKVRLQIYQTTAHNGFYRNFATNWMTRATIVAGTAGQQYVDNIFENHENDYELLTVNNSILSFDYENRTFETWSSKIDARHNYWSYNNTISVQSRIRDKSDDPMLLEVLAVPFQMNNETILDGKCPPGWALVHDTCFIYVGAPMTFHEARDFCRSENSTMPFIRTDKTTLWKYLQSQMRHLKYPDKVWIQDYNHIDRCTSFVFGEIEIEDCNKERGFICESDPRVIIDPLSWRADIFAISIISAFVLAIILLILVAFCWFAKSKHRHTQRLQRRNSIRQSLRSLNSIDPQGSLRRRPNYNMSSNGTLSKGQDYKQMVANGSIDSMDKSVLSSEAGSFEGYEQKPHYNEYVNQNALRPAHPAQDHQSHKVATISKASGHRARAAAAAAAALEPDAFELSYRNEGFRDNSTYGDNTRANSISTSVAEDTPIIHHTDQEIDEGGSDYYGNASTLPLRTEGGTPAGRRGQPGLAFLSELKQNLPEYQRSSHSSFMPHRSSGDSLPFDQKLDQFNYSTESSLYRPAPAVPSSQQATPADMRRPDSYYTAVRSSKAPVSHYRTPRPLAQPPAAPNVAPAGGPAQRRPKTVYQTASEESSPTTPSPLTNQYHRSKSEALLETDFDGDGGSVGLQPLQTNGRSHSQPLETAM</sequence>
<comment type="function">
    <text evidence="6 7">Required for the maturation but not the establishment of septate junctions in developing epithelial cells and is involved in epithelial cell adhesion during septate junction maturation (PubMed:25704509). Plays a role in the proper localization of the septate junction core components pck/mega, kune, Nrx-IV and Nrg during late embryogenesis (PubMed:25704509). Involved in the formation of tricellular junctions which mediate cell contact where three epithelial cells meet but not of bicellular junctions (PubMed:25982676). Required for the accumulation of Gli at tricellular junctions.</text>
</comment>
<comment type="subcellular location">
    <subcellularLocation>
        <location evidence="10">Cell membrane</location>
        <topology evidence="1">Single-pass type I membrane protein</topology>
    </subcellularLocation>
    <subcellularLocation>
        <location evidence="6 7">Cell junction</location>
        <location evidence="6 7">Septate junction</location>
    </subcellularLocation>
    <subcellularLocation>
        <location evidence="6">Cell junction</location>
        <location evidence="6">Adherens junction</location>
    </subcellularLocation>
    <text evidence="7">Found at specialized septate junction structures, known as tricellular junctions (TCJs), that mediate cell contacts at three-cell vertices.</text>
</comment>
<comment type="alternative products">
    <event type="alternative splicing"/>
    <isoform>
        <id>M9NDE3-1</id>
        <name evidence="11">B</name>
        <sequence type="displayed"/>
    </isoform>
    <isoform>
        <id>M9NDE3-2</id>
        <name evidence="11">A</name>
        <sequence type="described" ref="VSP_057995"/>
    </isoform>
</comment>
<comment type="tissue specificity">
    <text evidence="6 7">Expression detected in embryonic epithelia and central nervous system (at protein level) (PubMed:25982676). First detected during stage 13 in the tracheal system, the foregut, the hindgut, the salivary glands and the epidermis (PubMed:25704509, PubMed:25982676). Expression persists in these tissues until the end of embryogenesis (PubMed:25704509). Expression in epithelia declines from late stage 15 and expression appears in the central nervous system during stage 16 (PubMed:25982676).</text>
</comment>
<comment type="PTM">
    <text evidence="7">N-glycosylated.</text>
</comment>
<comment type="PTM">
    <text evidence="7">May be proteolytically cleaved in the extracellular domain.</text>
</comment>
<comment type="disruption phenotype">
    <text evidence="6 7">Embryonic lethality. Mutant embryos establish functional septate junctions but, due to rudimentary septae formation during subsequent embryonic development, these become non-functional (PubMed:25704509). Abnormal liquid clearance of tracheal tubes (PubMed:25704509). Convoluted and elongated tracheal branches (PubMed:25704509, PubMed:25982676). During late embryogenesis, mislocalization of septate junction core components pck/mega, kune, Nrx-IV and Nrg and impaired cell adhesion at the lateral cell membrane (PubMed:25704509). Mislocalization of Fas3 in the epithelia of mutant embryos and loss of accumulation of Gli at tricellular junctions (PubMed:25982676).</text>
</comment>
<comment type="miscellaneous">
    <text evidence="8 9">The name 'bark beetle' derives from the convoluted tracheal branches seen in mutant embryos which resemble the tracks of bark beetle larvae (PubMed:25704509). The name 'anakonda' is also based on the convoluted tracheal tube phenotype of mutant embryos (PubMed:25982676).</text>
</comment>
<protein>
    <recommendedName>
        <fullName evidence="8">Protein bark beetle</fullName>
    </recommendedName>
    <alternativeName>
        <fullName evidence="9">Protein anakonda</fullName>
    </alternativeName>
</protein>
<gene>
    <name evidence="11" type="primary">bark</name>
    <name evidence="9" type="synonym">aka</name>
    <name evidence="11" type="ORF">CG3921</name>
</gene>
<feature type="signal peptide" evidence="1">
    <location>
        <begin position="1"/>
        <end position="34"/>
    </location>
</feature>
<feature type="chain" id="PRO_5004101294" description="Protein bark beetle">
    <location>
        <begin position="35"/>
        <end position="3123"/>
    </location>
</feature>
<feature type="topological domain" description="Extracellular" evidence="10">
    <location>
        <begin position="35"/>
        <end position="2714"/>
    </location>
</feature>
<feature type="transmembrane region" description="Helical" evidence="1">
    <location>
        <begin position="2715"/>
        <end position="2735"/>
    </location>
</feature>
<feature type="topological domain" description="Cytoplasmic" evidence="10">
    <location>
        <begin position="2736"/>
        <end position="3123"/>
    </location>
</feature>
<feature type="domain" description="SRCR 1" evidence="3">
    <location>
        <begin position="191"/>
        <end position="295"/>
    </location>
</feature>
<feature type="repeat" description="PbH1 1" evidence="1">
    <location>
        <begin position="358"/>
        <end position="380"/>
    </location>
</feature>
<feature type="repeat" description="PbH1 2" evidence="1">
    <location>
        <begin position="382"/>
        <end position="404"/>
    </location>
</feature>
<feature type="repeat" description="PbH1 3" evidence="1">
    <location>
        <begin position="406"/>
        <end position="428"/>
    </location>
</feature>
<feature type="domain" description="CUB" evidence="2">
    <location>
        <begin position="446"/>
        <end position="559"/>
    </location>
</feature>
<feature type="repeat" description="PbH1 4" evidence="1">
    <location>
        <begin position="562"/>
        <end position="584"/>
    </location>
</feature>
<feature type="repeat" description="PbH1 5" evidence="1">
    <location>
        <begin position="586"/>
        <end position="609"/>
    </location>
</feature>
<feature type="repeat" description="PbH1 6" evidence="1">
    <location>
        <begin position="611"/>
        <end position="633"/>
    </location>
</feature>
<feature type="repeat" description="PbH1 7" evidence="1">
    <location>
        <begin position="756"/>
        <end position="778"/>
    </location>
</feature>
<feature type="repeat" description="PbH1 8" evidence="1">
    <location>
        <begin position="789"/>
        <end position="809"/>
    </location>
</feature>
<feature type="domain" description="SRCR 2" evidence="3">
    <location>
        <begin position="1071"/>
        <end position="1175"/>
    </location>
</feature>
<feature type="repeat" description="PbH1 9" evidence="1">
    <location>
        <begin position="1219"/>
        <end position="1241"/>
    </location>
</feature>
<feature type="repeat" description="PbH1 10" evidence="1">
    <location>
        <begin position="1248"/>
        <end position="1270"/>
    </location>
</feature>
<feature type="repeat" description="PbH1 11" evidence="1">
    <location>
        <begin position="1451"/>
        <end position="1475"/>
    </location>
</feature>
<feature type="repeat" description="PbH1 12" evidence="1">
    <location>
        <begin position="1489"/>
        <end position="1511"/>
    </location>
</feature>
<feature type="repeat" description="PbH1 13" evidence="1">
    <location>
        <begin position="1553"/>
        <end position="1575"/>
    </location>
</feature>
<feature type="repeat" description="PbH1 14" evidence="1">
    <location>
        <begin position="1722"/>
        <end position="1744"/>
    </location>
</feature>
<feature type="domain" description="SRCR 3" evidence="3">
    <location>
        <begin position="1912"/>
        <end position="2037"/>
    </location>
</feature>
<feature type="repeat" description="PbH1 15" evidence="1">
    <location>
        <begin position="2104"/>
        <end position="2126"/>
    </location>
</feature>
<feature type="repeat" description="PbH1 16" evidence="1">
    <location>
        <begin position="2128"/>
        <end position="2150"/>
    </location>
</feature>
<feature type="repeat" description="PbH1 17" evidence="1">
    <location>
        <begin position="2337"/>
        <end position="2361"/>
    </location>
</feature>
<feature type="repeat" description="PbH1 18" evidence="1">
    <location>
        <begin position="2372"/>
        <end position="2393"/>
    </location>
</feature>
<feature type="repeat" description="PbH1 19" evidence="1">
    <location>
        <begin position="2401"/>
        <end position="2424"/>
    </location>
</feature>
<feature type="region of interest" description="Disordered" evidence="5">
    <location>
        <begin position="83"/>
        <end position="104"/>
    </location>
</feature>
<feature type="region of interest" description="Disordered" evidence="5">
    <location>
        <begin position="2766"/>
        <end position="2789"/>
    </location>
</feature>
<feature type="region of interest" description="Disordered" evidence="5">
    <location>
        <begin position="2961"/>
        <end position="2983"/>
    </location>
</feature>
<feature type="region of interest" description="Disordered" evidence="5">
    <location>
        <begin position="2996"/>
        <end position="3015"/>
    </location>
</feature>
<feature type="region of interest" description="Disordered" evidence="5">
    <location>
        <begin position="3025"/>
        <end position="3123"/>
    </location>
</feature>
<feature type="compositionally biased region" description="Low complexity" evidence="5">
    <location>
        <begin position="91"/>
        <end position="102"/>
    </location>
</feature>
<feature type="compositionally biased region" description="Polar residues" evidence="5">
    <location>
        <begin position="2778"/>
        <end position="2788"/>
    </location>
</feature>
<feature type="compositionally biased region" description="Low complexity" evidence="5">
    <location>
        <begin position="2964"/>
        <end position="2973"/>
    </location>
</feature>
<feature type="compositionally biased region" description="Low complexity" evidence="5">
    <location>
        <begin position="3047"/>
        <end position="3057"/>
    </location>
</feature>
<feature type="compositionally biased region" description="Low complexity" evidence="5">
    <location>
        <begin position="3068"/>
        <end position="3078"/>
    </location>
</feature>
<feature type="compositionally biased region" description="Polar residues" evidence="5">
    <location>
        <begin position="3107"/>
        <end position="3123"/>
    </location>
</feature>
<feature type="glycosylation site" description="N-linked (GlcNAc...) asparagine" evidence="4">
    <location>
        <position position="221"/>
    </location>
</feature>
<feature type="glycosylation site" description="N-linked (GlcNAc...) asparagine" evidence="4">
    <location>
        <position position="377"/>
    </location>
</feature>
<feature type="glycosylation site" description="N-linked (GlcNAc...) asparagine" evidence="4">
    <location>
        <position position="389"/>
    </location>
</feature>
<feature type="glycosylation site" description="N-linked (GlcNAc...) asparagine" evidence="4">
    <location>
        <position position="403"/>
    </location>
</feature>
<feature type="glycosylation site" description="N-linked (GlcNAc...) asparagine" evidence="4">
    <location>
        <position position="498"/>
    </location>
</feature>
<feature type="glycosylation site" description="N-linked (GlcNAc...) asparagine" evidence="4">
    <location>
        <position position="523"/>
    </location>
</feature>
<feature type="glycosylation site" description="N-linked (GlcNAc...) asparagine" evidence="4">
    <location>
        <position position="615"/>
    </location>
</feature>
<feature type="glycosylation site" description="N-linked (GlcNAc...) asparagine" evidence="4">
    <location>
        <position position="620"/>
    </location>
</feature>
<feature type="glycosylation site" description="N-linked (GlcNAc...) asparagine" evidence="4">
    <location>
        <position position="630"/>
    </location>
</feature>
<feature type="glycosylation site" description="N-linked (GlcNAc...) asparagine" evidence="4">
    <location>
        <position position="639"/>
    </location>
</feature>
<feature type="glycosylation site" description="N-linked (GlcNAc...) asparagine" evidence="4">
    <location>
        <position position="658"/>
    </location>
</feature>
<feature type="glycosylation site" description="N-linked (GlcNAc...) asparagine" evidence="4">
    <location>
        <position position="672"/>
    </location>
</feature>
<feature type="glycosylation site" description="N-linked (GlcNAc...) asparagine" evidence="4">
    <location>
        <position position="702"/>
    </location>
</feature>
<feature type="glycosylation site" description="N-linked (GlcNAc...) asparagine" evidence="4">
    <location>
        <position position="709"/>
    </location>
</feature>
<feature type="glycosylation site" description="N-linked (GlcNAc...) asparagine" evidence="4">
    <location>
        <position position="834"/>
    </location>
</feature>
<feature type="glycosylation site" description="N-linked (GlcNAc...) asparagine" evidence="4">
    <location>
        <position position="900"/>
    </location>
</feature>
<feature type="glycosylation site" description="N-linked (GlcNAc...) asparagine" evidence="4">
    <location>
        <position position="1040"/>
    </location>
</feature>
<feature type="glycosylation site" description="N-linked (GlcNAc...) asparagine" evidence="4">
    <location>
        <position position="1375"/>
    </location>
</feature>
<feature type="glycosylation site" description="N-linked (GlcNAc...) asparagine" evidence="4">
    <location>
        <position position="1489"/>
    </location>
</feature>
<feature type="glycosylation site" description="N-linked (GlcNAc...) asparagine" evidence="4">
    <location>
        <position position="1520"/>
    </location>
</feature>
<feature type="glycosylation site" description="N-linked (GlcNAc...) asparagine" evidence="4">
    <location>
        <position position="1529"/>
    </location>
</feature>
<feature type="glycosylation site" description="N-linked (GlcNAc...) asparagine" evidence="4">
    <location>
        <position position="1584"/>
    </location>
</feature>
<feature type="glycosylation site" description="N-linked (GlcNAc...) asparagine" evidence="4">
    <location>
        <position position="1593"/>
    </location>
</feature>
<feature type="glycosylation site" description="N-linked (GlcNAc...) asparagine" evidence="4">
    <location>
        <position position="1614"/>
    </location>
</feature>
<feature type="glycosylation site" description="N-linked (GlcNAc...) asparagine" evidence="4">
    <location>
        <position position="1883"/>
    </location>
</feature>
<feature type="glycosylation site" description="N-linked (GlcNAc...) asparagine" evidence="4">
    <location>
        <position position="1920"/>
    </location>
</feature>
<feature type="glycosylation site" description="N-linked (GlcNAc...) asparagine" evidence="4">
    <location>
        <position position="1940"/>
    </location>
</feature>
<feature type="glycosylation site" description="N-linked (GlcNAc...) asparagine" evidence="4">
    <location>
        <position position="2139"/>
    </location>
</feature>
<feature type="glycosylation site" description="N-linked (GlcNAc...) asparagine" evidence="4">
    <location>
        <position position="2231"/>
    </location>
</feature>
<feature type="glycosylation site" description="N-linked (GlcNAc...) asparagine" evidence="4">
    <location>
        <position position="2251"/>
    </location>
</feature>
<feature type="glycosylation site" description="N-linked (GlcNAc...) asparagine" evidence="4">
    <location>
        <position position="2314"/>
    </location>
</feature>
<feature type="glycosylation site" description="N-linked (GlcNAc...) asparagine" evidence="4">
    <location>
        <position position="2357"/>
    </location>
</feature>
<feature type="glycosylation site" description="N-linked (GlcNAc...) asparagine" evidence="4">
    <location>
        <position position="2459"/>
    </location>
</feature>
<feature type="glycosylation site" description="N-linked (GlcNAc...) asparagine" evidence="4">
    <location>
        <position position="2536"/>
    </location>
</feature>
<feature type="glycosylation site" description="N-linked (GlcNAc...) asparagine" evidence="4">
    <location>
        <position position="2546"/>
    </location>
</feature>
<feature type="glycosylation site" description="N-linked (GlcNAc...) asparagine" evidence="4">
    <location>
        <position position="2566"/>
    </location>
</feature>
<feature type="glycosylation site" description="N-linked (GlcNAc...) asparagine" evidence="4">
    <location>
        <position position="2596"/>
    </location>
</feature>
<feature type="glycosylation site" description="N-linked (GlcNAc...) asparagine" evidence="4">
    <location>
        <position position="2636"/>
    </location>
</feature>
<feature type="disulfide bond" evidence="3">
    <location>
        <begin position="216"/>
        <end position="284"/>
    </location>
</feature>
<feature type="disulfide bond" evidence="3">
    <location>
        <begin position="231"/>
        <end position="294"/>
    </location>
</feature>
<feature type="disulfide bond" evidence="3">
    <location>
        <begin position="262"/>
        <end position="272"/>
    </location>
</feature>
<feature type="disulfide bond" evidence="2">
    <location>
        <begin position="446"/>
        <end position="474"/>
    </location>
</feature>
<feature type="disulfide bond" evidence="3">
    <location>
        <begin position="1096"/>
        <end position="1164"/>
    </location>
</feature>
<feature type="disulfide bond" evidence="3">
    <location>
        <begin position="1109"/>
        <end position="1174"/>
    </location>
</feature>
<feature type="disulfide bond" evidence="3">
    <location>
        <begin position="1144"/>
        <end position="1154"/>
    </location>
</feature>
<feature type="disulfide bond" evidence="3">
    <location>
        <begin position="1950"/>
        <end position="2025"/>
    </location>
</feature>
<feature type="disulfide bond" evidence="3">
    <location>
        <begin position="1963"/>
        <end position="2036"/>
    </location>
</feature>
<feature type="disulfide bond" evidence="3">
    <location>
        <begin position="2000"/>
        <end position="2010"/>
    </location>
</feature>
<feature type="splice variant" id="VSP_057995" description="In isoform A.">
    <original>ILSFDYENR</original>
    <variation>M</variation>
    <location>
        <begin position="2539"/>
        <end position="2547"/>
    </location>
</feature>
<feature type="mutagenesis site" description="In L224; embryonic lethality with excessively elongated tracheal tubes." evidence="7">
    <original>V</original>
    <variation>E</variation>
    <location>
        <position position="503"/>
    </location>
</feature>
<feature type="mutagenesis site" description="In J55; embryonic lethality with excessively elongated tracheal tubes." evidence="7">
    <original>V</original>
    <variation>E</variation>
    <location>
        <position position="567"/>
    </location>
</feature>
<feature type="mutagenesis site" description="In K93; embryonic lethality with excessively elongated tracheal tubes." evidence="7">
    <original>E</original>
    <variation>K</variation>
    <location>
        <position position="678"/>
    </location>
</feature>
<feature type="mutagenesis site" description="In K104; embryonic lethality with excessively elongated tracheal tubes." evidence="7">
    <original>S</original>
    <variation>L</variation>
    <location>
        <position position="680"/>
    </location>
</feature>
<evidence type="ECO:0000255" key="1"/>
<evidence type="ECO:0000255" key="2">
    <source>
        <dbReference type="PROSITE-ProRule" id="PRU00059"/>
    </source>
</evidence>
<evidence type="ECO:0000255" key="3">
    <source>
        <dbReference type="PROSITE-ProRule" id="PRU00196"/>
    </source>
</evidence>
<evidence type="ECO:0000255" key="4">
    <source>
        <dbReference type="PROSITE-ProRule" id="PRU00498"/>
    </source>
</evidence>
<evidence type="ECO:0000256" key="5">
    <source>
        <dbReference type="SAM" id="MobiDB-lite"/>
    </source>
</evidence>
<evidence type="ECO:0000269" key="6">
    <source>
    </source>
</evidence>
<evidence type="ECO:0000269" key="7">
    <source>
    </source>
</evidence>
<evidence type="ECO:0000303" key="8">
    <source>
    </source>
</evidence>
<evidence type="ECO:0000303" key="9">
    <source>
    </source>
</evidence>
<evidence type="ECO:0000305" key="10"/>
<evidence type="ECO:0000312" key="11">
    <source>
        <dbReference type="FlyBase" id="FBgn0031571"/>
    </source>
</evidence>
<evidence type="ECO:0000312" key="12">
    <source>
        <dbReference type="Proteomes" id="UP000000803"/>
    </source>
</evidence>
<dbReference type="EMBL" id="AE014134">
    <property type="protein sequence ID" value="AAF51061.1"/>
    <property type="molecule type" value="Genomic_DNA"/>
</dbReference>
<dbReference type="EMBL" id="AE014134">
    <property type="protein sequence ID" value="AFH03540.1"/>
    <property type="molecule type" value="Genomic_DNA"/>
</dbReference>
<dbReference type="EMBL" id="AE014134">
    <property type="protein sequence ID" value="AFH03541.1"/>
    <property type="molecule type" value="Genomic_DNA"/>
</dbReference>
<dbReference type="RefSeq" id="NP_001245864.1">
    <molecule id="M9NDE3-1"/>
    <property type="nucleotide sequence ID" value="NM_001258935.3"/>
</dbReference>
<dbReference type="RefSeq" id="NP_001245865.1">
    <molecule id="M9NDE3-1"/>
    <property type="nucleotide sequence ID" value="NM_001258936.2"/>
</dbReference>
<dbReference type="RefSeq" id="NP_608808.1">
    <molecule id="M9NDE3-2"/>
    <property type="nucleotide sequence ID" value="NM_134964.4"/>
</dbReference>
<dbReference type="SMR" id="M9NDE3"/>
<dbReference type="FunCoup" id="M9NDE3">
    <property type="interactions" value="11"/>
</dbReference>
<dbReference type="IntAct" id="M9NDE3">
    <property type="interactions" value="3"/>
</dbReference>
<dbReference type="STRING" id="7227.FBpp0297894"/>
<dbReference type="GlyCosmos" id="M9NDE3">
    <property type="glycosylation" value="38 sites, No reported glycans"/>
</dbReference>
<dbReference type="GlyGen" id="M9NDE3">
    <property type="glycosylation" value="43 sites"/>
</dbReference>
<dbReference type="PaxDb" id="7227-FBpp0297894"/>
<dbReference type="EnsemblMetazoa" id="FBtr0077496">
    <molecule id="M9NDE3-2"/>
    <property type="protein sequence ID" value="FBpp0077185"/>
    <property type="gene ID" value="FBgn0031571"/>
</dbReference>
<dbReference type="EnsemblMetazoa" id="FBtr0307051">
    <molecule id="M9NDE3-1"/>
    <property type="protein sequence ID" value="FBpp0297894"/>
    <property type="gene ID" value="FBgn0031571"/>
</dbReference>
<dbReference type="EnsemblMetazoa" id="FBtr0307052">
    <molecule id="M9NDE3-1"/>
    <property type="protein sequence ID" value="FBpp0297895"/>
    <property type="gene ID" value="FBgn0031571"/>
</dbReference>
<dbReference type="GeneID" id="33604"/>
<dbReference type="KEGG" id="dme:Dmel_CG3921"/>
<dbReference type="UCSC" id="CG3921-RA">
    <property type="organism name" value="d. melanogaster"/>
</dbReference>
<dbReference type="AGR" id="FB:FBgn0031571"/>
<dbReference type="CTD" id="33604"/>
<dbReference type="FlyBase" id="FBgn0031571">
    <property type="gene designation" value="bark"/>
</dbReference>
<dbReference type="VEuPathDB" id="VectorBase:FBgn0031571"/>
<dbReference type="eggNOG" id="ENOG502QT9G">
    <property type="taxonomic scope" value="Eukaryota"/>
</dbReference>
<dbReference type="HOGENOM" id="CLU_000296_1_0_1"/>
<dbReference type="InParanoid" id="M9NDE3"/>
<dbReference type="OMA" id="AIKHWRG"/>
<dbReference type="OrthoDB" id="536948at2759"/>
<dbReference type="PhylomeDB" id="M9NDE3"/>
<dbReference type="SignaLink" id="M9NDE3"/>
<dbReference type="BioGRID-ORCS" id="33604">
    <property type="hits" value="0 hits in 1 CRISPR screen"/>
</dbReference>
<dbReference type="GenomeRNAi" id="33604"/>
<dbReference type="PRO" id="PR:M9NDE3"/>
<dbReference type="Proteomes" id="UP000000803">
    <property type="component" value="Chromosome 2L"/>
</dbReference>
<dbReference type="Bgee" id="FBgn0031571">
    <property type="expression patterns" value="Expressed in enterocyte of posterior adult midgut epithelium (Drosophila) in digestive tract and 126 other cell types or tissues"/>
</dbReference>
<dbReference type="GO" id="GO:0005912">
    <property type="term" value="C:adherens junction"/>
    <property type="evidence" value="ECO:0007669"/>
    <property type="project" value="UniProtKB-SubCell"/>
</dbReference>
<dbReference type="GO" id="GO:0016328">
    <property type="term" value="C:lateral plasma membrane"/>
    <property type="evidence" value="ECO:0000314"/>
    <property type="project" value="FlyBase"/>
</dbReference>
<dbReference type="GO" id="GO:0016020">
    <property type="term" value="C:membrane"/>
    <property type="evidence" value="ECO:0000318"/>
    <property type="project" value="GO_Central"/>
</dbReference>
<dbReference type="GO" id="GO:0005918">
    <property type="term" value="C:septate junction"/>
    <property type="evidence" value="ECO:0000314"/>
    <property type="project" value="FlyBase"/>
</dbReference>
<dbReference type="GO" id="GO:0061689">
    <property type="term" value="C:tricellular tight junction"/>
    <property type="evidence" value="ECO:0000314"/>
    <property type="project" value="FlyBase"/>
</dbReference>
<dbReference type="GO" id="GO:0030246">
    <property type="term" value="F:carbohydrate binding"/>
    <property type="evidence" value="ECO:0000250"/>
    <property type="project" value="FlyBase"/>
</dbReference>
<dbReference type="GO" id="GO:0045217">
    <property type="term" value="P:cell-cell junction maintenance"/>
    <property type="evidence" value="ECO:0000315"/>
    <property type="project" value="FlyBase"/>
</dbReference>
<dbReference type="GO" id="GO:0035002">
    <property type="term" value="P:liquid clearance, open tracheal system"/>
    <property type="evidence" value="ECO:0000315"/>
    <property type="project" value="FlyBase"/>
</dbReference>
<dbReference type="GO" id="GO:0035159">
    <property type="term" value="P:regulation of tube length, open tracheal system"/>
    <property type="evidence" value="ECO:0000315"/>
    <property type="project" value="FlyBase"/>
</dbReference>
<dbReference type="GO" id="GO:0034976">
    <property type="term" value="P:response to endoplasmic reticulum stress"/>
    <property type="evidence" value="ECO:0007001"/>
    <property type="project" value="FlyBase"/>
</dbReference>
<dbReference type="GO" id="GO:1904274">
    <property type="term" value="P:tricellular tight junction assembly"/>
    <property type="evidence" value="ECO:0000315"/>
    <property type="project" value="FlyBase"/>
</dbReference>
<dbReference type="CDD" id="cd00037">
    <property type="entry name" value="CLECT"/>
    <property type="match status" value="1"/>
</dbReference>
<dbReference type="CDD" id="cd00041">
    <property type="entry name" value="CUB"/>
    <property type="match status" value="1"/>
</dbReference>
<dbReference type="FunFam" id="3.10.250.10:FF:000042">
    <property type="entry name" value="Lysyl oxidase-like 2"/>
    <property type="match status" value="1"/>
</dbReference>
<dbReference type="FunFam" id="3.10.250.10:FF:000016">
    <property type="entry name" value="Scavenger receptor cysteine-rich protein type 12"/>
    <property type="match status" value="1"/>
</dbReference>
<dbReference type="Gene3D" id="3.10.100.10">
    <property type="entry name" value="Mannose-Binding Protein A, subunit A"/>
    <property type="match status" value="1"/>
</dbReference>
<dbReference type="Gene3D" id="2.60.120.290">
    <property type="entry name" value="Spermadhesin, CUB domain"/>
    <property type="match status" value="1"/>
</dbReference>
<dbReference type="Gene3D" id="3.10.250.10">
    <property type="entry name" value="SRCR-like domain"/>
    <property type="match status" value="3"/>
</dbReference>
<dbReference type="InterPro" id="IPR016186">
    <property type="entry name" value="C-type_lectin-like/link_sf"/>
</dbReference>
<dbReference type="InterPro" id="IPR016187">
    <property type="entry name" value="CTDL_fold"/>
</dbReference>
<dbReference type="InterPro" id="IPR000859">
    <property type="entry name" value="CUB_dom"/>
</dbReference>
<dbReference type="InterPro" id="IPR006626">
    <property type="entry name" value="PbH1"/>
</dbReference>
<dbReference type="InterPro" id="IPR011050">
    <property type="entry name" value="Pectin_lyase_fold/virulence"/>
</dbReference>
<dbReference type="InterPro" id="IPR053243">
    <property type="entry name" value="SJ_maturation_regulator"/>
</dbReference>
<dbReference type="InterPro" id="IPR035914">
    <property type="entry name" value="Sperma_CUB_dom_sf"/>
</dbReference>
<dbReference type="InterPro" id="IPR001190">
    <property type="entry name" value="SRCR"/>
</dbReference>
<dbReference type="InterPro" id="IPR036772">
    <property type="entry name" value="SRCR-like_dom_sf"/>
</dbReference>
<dbReference type="PANTHER" id="PTHR47653:SF1">
    <property type="entry name" value="DELETED IN MALIGNANT BRAIN TUMORS 1 PROTEIN"/>
    <property type="match status" value="1"/>
</dbReference>
<dbReference type="PANTHER" id="PTHR47653">
    <property type="entry name" value="PROTEIN BARK BEETLE"/>
    <property type="match status" value="1"/>
</dbReference>
<dbReference type="Pfam" id="PF00530">
    <property type="entry name" value="SRCR"/>
    <property type="match status" value="3"/>
</dbReference>
<dbReference type="PRINTS" id="PR00258">
    <property type="entry name" value="SPERACTRCPTR"/>
</dbReference>
<dbReference type="SMART" id="SM00710">
    <property type="entry name" value="PbH1"/>
    <property type="match status" value="19"/>
</dbReference>
<dbReference type="SMART" id="SM00202">
    <property type="entry name" value="SR"/>
    <property type="match status" value="3"/>
</dbReference>
<dbReference type="SUPFAM" id="SSF56436">
    <property type="entry name" value="C-type lectin-like"/>
    <property type="match status" value="1"/>
</dbReference>
<dbReference type="SUPFAM" id="SSF51126">
    <property type="entry name" value="Pectin lyase-like"/>
    <property type="match status" value="1"/>
</dbReference>
<dbReference type="SUPFAM" id="SSF49854">
    <property type="entry name" value="Spermadhesin, CUB domain"/>
    <property type="match status" value="1"/>
</dbReference>
<dbReference type="SUPFAM" id="SSF56487">
    <property type="entry name" value="SRCR-like"/>
    <property type="match status" value="3"/>
</dbReference>
<dbReference type="PROSITE" id="PS00420">
    <property type="entry name" value="SRCR_1"/>
    <property type="match status" value="1"/>
</dbReference>
<dbReference type="PROSITE" id="PS50287">
    <property type="entry name" value="SRCR_2"/>
    <property type="match status" value="3"/>
</dbReference>
<organism evidence="12">
    <name type="scientific">Drosophila melanogaster</name>
    <name type="common">Fruit fly</name>
    <dbReference type="NCBI Taxonomy" id="7227"/>
    <lineage>
        <taxon>Eukaryota</taxon>
        <taxon>Metazoa</taxon>
        <taxon>Ecdysozoa</taxon>
        <taxon>Arthropoda</taxon>
        <taxon>Hexapoda</taxon>
        <taxon>Insecta</taxon>
        <taxon>Pterygota</taxon>
        <taxon>Neoptera</taxon>
        <taxon>Endopterygota</taxon>
        <taxon>Diptera</taxon>
        <taxon>Brachycera</taxon>
        <taxon>Muscomorpha</taxon>
        <taxon>Ephydroidea</taxon>
        <taxon>Drosophilidae</taxon>
        <taxon>Drosophila</taxon>
        <taxon>Sophophora</taxon>
    </lineage>
</organism>
<reference evidence="12" key="1">
    <citation type="journal article" date="2000" name="Science">
        <title>The genome sequence of Drosophila melanogaster.</title>
        <authorList>
            <person name="Adams M.D."/>
            <person name="Celniker S.E."/>
            <person name="Holt R.A."/>
            <person name="Evans C.A."/>
            <person name="Gocayne J.D."/>
            <person name="Amanatides P.G."/>
            <person name="Scherer S.E."/>
            <person name="Li P.W."/>
            <person name="Hoskins R.A."/>
            <person name="Galle R.F."/>
            <person name="George R.A."/>
            <person name="Lewis S.E."/>
            <person name="Richards S."/>
            <person name="Ashburner M."/>
            <person name="Henderson S.N."/>
            <person name="Sutton G.G."/>
            <person name="Wortman J.R."/>
            <person name="Yandell M.D."/>
            <person name="Zhang Q."/>
            <person name="Chen L.X."/>
            <person name="Brandon R.C."/>
            <person name="Rogers Y.-H.C."/>
            <person name="Blazej R.G."/>
            <person name="Champe M."/>
            <person name="Pfeiffer B.D."/>
            <person name="Wan K.H."/>
            <person name="Doyle C."/>
            <person name="Baxter E.G."/>
            <person name="Helt G."/>
            <person name="Nelson C.R."/>
            <person name="Miklos G.L.G."/>
            <person name="Abril J.F."/>
            <person name="Agbayani A."/>
            <person name="An H.-J."/>
            <person name="Andrews-Pfannkoch C."/>
            <person name="Baldwin D."/>
            <person name="Ballew R.M."/>
            <person name="Basu A."/>
            <person name="Baxendale J."/>
            <person name="Bayraktaroglu L."/>
            <person name="Beasley E.M."/>
            <person name="Beeson K.Y."/>
            <person name="Benos P.V."/>
            <person name="Berman B.P."/>
            <person name="Bhandari D."/>
            <person name="Bolshakov S."/>
            <person name="Borkova D."/>
            <person name="Botchan M.R."/>
            <person name="Bouck J."/>
            <person name="Brokstein P."/>
            <person name="Brottier P."/>
            <person name="Burtis K.C."/>
            <person name="Busam D.A."/>
            <person name="Butler H."/>
            <person name="Cadieu E."/>
            <person name="Center A."/>
            <person name="Chandra I."/>
            <person name="Cherry J.M."/>
            <person name="Cawley S."/>
            <person name="Dahlke C."/>
            <person name="Davenport L.B."/>
            <person name="Davies P."/>
            <person name="de Pablos B."/>
            <person name="Delcher A."/>
            <person name="Deng Z."/>
            <person name="Mays A.D."/>
            <person name="Dew I."/>
            <person name="Dietz S.M."/>
            <person name="Dodson K."/>
            <person name="Doup L.E."/>
            <person name="Downes M."/>
            <person name="Dugan-Rocha S."/>
            <person name="Dunkov B.C."/>
            <person name="Dunn P."/>
            <person name="Durbin K.J."/>
            <person name="Evangelista C.C."/>
            <person name="Ferraz C."/>
            <person name="Ferriera S."/>
            <person name="Fleischmann W."/>
            <person name="Fosler C."/>
            <person name="Gabrielian A.E."/>
            <person name="Garg N.S."/>
            <person name="Gelbart W.M."/>
            <person name="Glasser K."/>
            <person name="Glodek A."/>
            <person name="Gong F."/>
            <person name="Gorrell J.H."/>
            <person name="Gu Z."/>
            <person name="Guan P."/>
            <person name="Harris M."/>
            <person name="Harris N.L."/>
            <person name="Harvey D.A."/>
            <person name="Heiman T.J."/>
            <person name="Hernandez J.R."/>
            <person name="Houck J."/>
            <person name="Hostin D."/>
            <person name="Houston K.A."/>
            <person name="Howland T.J."/>
            <person name="Wei M.-H."/>
            <person name="Ibegwam C."/>
            <person name="Jalali M."/>
            <person name="Kalush F."/>
            <person name="Karpen G.H."/>
            <person name="Ke Z."/>
            <person name="Kennison J.A."/>
            <person name="Ketchum K.A."/>
            <person name="Kimmel B.E."/>
            <person name="Kodira C.D."/>
            <person name="Kraft C.L."/>
            <person name="Kravitz S."/>
            <person name="Kulp D."/>
            <person name="Lai Z."/>
            <person name="Lasko P."/>
            <person name="Lei Y."/>
            <person name="Levitsky A.A."/>
            <person name="Li J.H."/>
            <person name="Li Z."/>
            <person name="Liang Y."/>
            <person name="Lin X."/>
            <person name="Liu X."/>
            <person name="Mattei B."/>
            <person name="McIntosh T.C."/>
            <person name="McLeod M.P."/>
            <person name="McPherson D."/>
            <person name="Merkulov G."/>
            <person name="Milshina N.V."/>
            <person name="Mobarry C."/>
            <person name="Morris J."/>
            <person name="Moshrefi A."/>
            <person name="Mount S.M."/>
            <person name="Moy M."/>
            <person name="Murphy B."/>
            <person name="Murphy L."/>
            <person name="Muzny D.M."/>
            <person name="Nelson D.L."/>
            <person name="Nelson D.R."/>
            <person name="Nelson K.A."/>
            <person name="Nixon K."/>
            <person name="Nusskern D.R."/>
            <person name="Pacleb J.M."/>
            <person name="Palazzolo M."/>
            <person name="Pittman G.S."/>
            <person name="Pan S."/>
            <person name="Pollard J."/>
            <person name="Puri V."/>
            <person name="Reese M.G."/>
            <person name="Reinert K."/>
            <person name="Remington K."/>
            <person name="Saunders R.D.C."/>
            <person name="Scheeler F."/>
            <person name="Shen H."/>
            <person name="Shue B.C."/>
            <person name="Siden-Kiamos I."/>
            <person name="Simpson M."/>
            <person name="Skupski M.P."/>
            <person name="Smith T.J."/>
            <person name="Spier E."/>
            <person name="Spradling A.C."/>
            <person name="Stapleton M."/>
            <person name="Strong R."/>
            <person name="Sun E."/>
            <person name="Svirskas R."/>
            <person name="Tector C."/>
            <person name="Turner R."/>
            <person name="Venter E."/>
            <person name="Wang A.H."/>
            <person name="Wang X."/>
            <person name="Wang Z.-Y."/>
            <person name="Wassarman D.A."/>
            <person name="Weinstock G.M."/>
            <person name="Weissenbach J."/>
            <person name="Williams S.M."/>
            <person name="Woodage T."/>
            <person name="Worley K.C."/>
            <person name="Wu D."/>
            <person name="Yang S."/>
            <person name="Yao Q.A."/>
            <person name="Ye J."/>
            <person name="Yeh R.-F."/>
            <person name="Zaveri J.S."/>
            <person name="Zhan M."/>
            <person name="Zhang G."/>
            <person name="Zhao Q."/>
            <person name="Zheng L."/>
            <person name="Zheng X.H."/>
            <person name="Zhong F.N."/>
            <person name="Zhong W."/>
            <person name="Zhou X."/>
            <person name="Zhu S.C."/>
            <person name="Zhu X."/>
            <person name="Smith H.O."/>
            <person name="Gibbs R.A."/>
            <person name="Myers E.W."/>
            <person name="Rubin G.M."/>
            <person name="Venter J.C."/>
        </authorList>
    </citation>
    <scope>NUCLEOTIDE SEQUENCE [LARGE SCALE GENOMIC DNA]</scope>
    <source>
        <strain evidence="12">Berkeley</strain>
    </source>
</reference>
<reference evidence="12" key="2">
    <citation type="journal article" date="2002" name="Genome Biol.">
        <title>Annotation of the Drosophila melanogaster euchromatic genome: a systematic review.</title>
        <authorList>
            <person name="Misra S."/>
            <person name="Crosby M.A."/>
            <person name="Mungall C.J."/>
            <person name="Matthews B.B."/>
            <person name="Campbell K.S."/>
            <person name="Hradecky P."/>
            <person name="Huang Y."/>
            <person name="Kaminker J.S."/>
            <person name="Millburn G.H."/>
            <person name="Prochnik S.E."/>
            <person name="Smith C.D."/>
            <person name="Tupy J.L."/>
            <person name="Whitfield E.J."/>
            <person name="Bayraktaroglu L."/>
            <person name="Berman B.P."/>
            <person name="Bettencourt B.R."/>
            <person name="Celniker S.E."/>
            <person name="de Grey A.D.N.J."/>
            <person name="Drysdale R.A."/>
            <person name="Harris N.L."/>
            <person name="Richter J."/>
            <person name="Russo S."/>
            <person name="Schroeder A.J."/>
            <person name="Shu S.Q."/>
            <person name="Stapleton M."/>
            <person name="Yamada C."/>
            <person name="Ashburner M."/>
            <person name="Gelbart W.M."/>
            <person name="Rubin G.M."/>
            <person name="Lewis S.E."/>
        </authorList>
    </citation>
    <scope>GENOME REANNOTATION</scope>
    <source>
        <strain evidence="12">Berkeley</strain>
    </source>
</reference>
<reference evidence="10" key="3">
    <citation type="journal article" date="2015" name="Dev. Biol.">
        <title>Bark beetle controls epithelial morphogenesis by septate junction maturation in Drosophila.</title>
        <authorList>
            <person name="Hildebrandt A."/>
            <person name="Pflanz R."/>
            <person name="Behr M."/>
            <person name="Tarp T."/>
            <person name="Riedel D."/>
            <person name="Schuh R."/>
        </authorList>
    </citation>
    <scope>FUNCTION</scope>
    <scope>SUBCELLULAR LOCATION</scope>
    <scope>TISSUE SPECIFICITY</scope>
    <scope>DISRUPTION PHENOTYPE</scope>
</reference>
<reference evidence="10" key="4">
    <citation type="journal article" date="2015" name="Dev. Cell">
        <title>The triple-repeat protein anakonda controls epithelial tricellular junction formation in Drosophila.</title>
        <authorList>
            <person name="Byri S."/>
            <person name="Misra T."/>
            <person name="Syed Z.A."/>
            <person name="Baetz T."/>
            <person name="Shah J."/>
            <person name="Boril L."/>
            <person name="Glashauser J."/>
            <person name="Aegerter-Wilmsen T."/>
            <person name="Matzat T."/>
            <person name="Moussian B."/>
            <person name="Uv A."/>
            <person name="Luschnig S."/>
        </authorList>
    </citation>
    <scope>FUNCTION</scope>
    <scope>SUBCELLULAR LOCATION</scope>
    <scope>TISSUE SPECIFICITY</scope>
    <scope>GLYCOSYLATION</scope>
    <scope>CLEAVAGE</scope>
    <scope>DISRUPTION PHENOTYPE</scope>
    <scope>MUTAGENESIS OF VAL-503; VAL-567; GLU-678 AND SER-680</scope>
    <scope>IDENTIFICATION BY MASS SPECTROMETRY</scope>
</reference>
<keyword id="KW-0025">Alternative splicing</keyword>
<keyword id="KW-0965">Cell junction</keyword>
<keyword id="KW-1003">Cell membrane</keyword>
<keyword id="KW-1015">Disulfide bond</keyword>
<keyword id="KW-0325">Glycoprotein</keyword>
<keyword id="KW-0472">Membrane</keyword>
<keyword id="KW-1185">Reference proteome</keyword>
<keyword id="KW-0677">Repeat</keyword>
<keyword id="KW-0732">Signal</keyword>
<keyword id="KW-0812">Transmembrane</keyword>
<keyword id="KW-1133">Transmembrane helix</keyword>
<proteinExistence type="evidence at protein level"/>